<organism>
    <name type="scientific">Bacillus subtilis (strain 168)</name>
    <dbReference type="NCBI Taxonomy" id="224308"/>
    <lineage>
        <taxon>Bacteria</taxon>
        <taxon>Bacillati</taxon>
        <taxon>Bacillota</taxon>
        <taxon>Bacilli</taxon>
        <taxon>Bacillales</taxon>
        <taxon>Bacillaceae</taxon>
        <taxon>Bacillus</taxon>
    </lineage>
</organism>
<accession>P26905</accession>
<dbReference type="EC" id="7.4.2.9" evidence="1"/>
<dbReference type="EMBL" id="X56678">
    <property type="protein sequence ID" value="CAA40005.1"/>
    <property type="molecule type" value="Genomic_DNA"/>
</dbReference>
<dbReference type="EMBL" id="AJ002571">
    <property type="protein sequence ID" value="CAA05575.1"/>
    <property type="molecule type" value="Genomic_DNA"/>
</dbReference>
<dbReference type="EMBL" id="AL009126">
    <property type="protein sequence ID" value="CAB13152.1"/>
    <property type="molecule type" value="Genomic_DNA"/>
</dbReference>
<dbReference type="PIR" id="S16650">
    <property type="entry name" value="S16650"/>
</dbReference>
<dbReference type="RefSeq" id="NP_389178.1">
    <property type="nucleotide sequence ID" value="NC_000964.3"/>
</dbReference>
<dbReference type="RefSeq" id="WP_003232615.1">
    <property type="nucleotide sequence ID" value="NZ_OZ025638.1"/>
</dbReference>
<dbReference type="SMR" id="P26905"/>
<dbReference type="FunCoup" id="P26905">
    <property type="interactions" value="423"/>
</dbReference>
<dbReference type="STRING" id="224308.BSU12950"/>
<dbReference type="TCDB" id="3.A.1.5.2">
    <property type="family name" value="the atp-binding cassette (abc) superfamily"/>
</dbReference>
<dbReference type="PaxDb" id="224308-BSU12950"/>
<dbReference type="EnsemblBacteria" id="CAB13152">
    <property type="protein sequence ID" value="CAB13152"/>
    <property type="gene ID" value="BSU_12950"/>
</dbReference>
<dbReference type="GeneID" id="938628"/>
<dbReference type="KEGG" id="bsu:BSU12950"/>
<dbReference type="PATRIC" id="fig|224308.179.peg.1407"/>
<dbReference type="eggNOG" id="COG0444">
    <property type="taxonomic scope" value="Bacteria"/>
</dbReference>
<dbReference type="InParanoid" id="P26905"/>
<dbReference type="OrthoDB" id="9802264at2"/>
<dbReference type="PhylomeDB" id="P26905"/>
<dbReference type="BioCyc" id="BSUB:BSU12950-MONOMER"/>
<dbReference type="Proteomes" id="UP000001570">
    <property type="component" value="Chromosome"/>
</dbReference>
<dbReference type="GO" id="GO:0005886">
    <property type="term" value="C:plasma membrane"/>
    <property type="evidence" value="ECO:0000318"/>
    <property type="project" value="GO_Central"/>
</dbReference>
<dbReference type="GO" id="GO:0005524">
    <property type="term" value="F:ATP binding"/>
    <property type="evidence" value="ECO:0007669"/>
    <property type="project" value="UniProtKB-KW"/>
</dbReference>
<dbReference type="GO" id="GO:0016887">
    <property type="term" value="F:ATP hydrolysis activity"/>
    <property type="evidence" value="ECO:0007669"/>
    <property type="project" value="InterPro"/>
</dbReference>
<dbReference type="GO" id="GO:0022857">
    <property type="term" value="F:transmembrane transporter activity"/>
    <property type="evidence" value="ECO:0000318"/>
    <property type="project" value="GO_Central"/>
</dbReference>
<dbReference type="GO" id="GO:0015833">
    <property type="term" value="P:peptide transport"/>
    <property type="evidence" value="ECO:0007669"/>
    <property type="project" value="UniProtKB-KW"/>
</dbReference>
<dbReference type="GO" id="GO:0015031">
    <property type="term" value="P:protein transport"/>
    <property type="evidence" value="ECO:0007669"/>
    <property type="project" value="UniProtKB-KW"/>
</dbReference>
<dbReference type="GO" id="GO:0030435">
    <property type="term" value="P:sporulation resulting in formation of a cellular spore"/>
    <property type="evidence" value="ECO:0007669"/>
    <property type="project" value="UniProtKB-KW"/>
</dbReference>
<dbReference type="GO" id="GO:0055085">
    <property type="term" value="P:transmembrane transport"/>
    <property type="evidence" value="ECO:0000318"/>
    <property type="project" value="GO_Central"/>
</dbReference>
<dbReference type="CDD" id="cd03257">
    <property type="entry name" value="ABC_NikE_OppD_transporters"/>
    <property type="match status" value="1"/>
</dbReference>
<dbReference type="FunFam" id="3.40.50.300:FF:000016">
    <property type="entry name" value="Oligopeptide ABC transporter ATP-binding component"/>
    <property type="match status" value="1"/>
</dbReference>
<dbReference type="Gene3D" id="3.40.50.300">
    <property type="entry name" value="P-loop containing nucleotide triphosphate hydrolases"/>
    <property type="match status" value="1"/>
</dbReference>
<dbReference type="InterPro" id="IPR003593">
    <property type="entry name" value="AAA+_ATPase"/>
</dbReference>
<dbReference type="InterPro" id="IPR050388">
    <property type="entry name" value="ABC_Ni/Peptide_Import"/>
</dbReference>
<dbReference type="InterPro" id="IPR003439">
    <property type="entry name" value="ABC_transporter-like_ATP-bd"/>
</dbReference>
<dbReference type="InterPro" id="IPR017871">
    <property type="entry name" value="ABC_transporter-like_CS"/>
</dbReference>
<dbReference type="InterPro" id="IPR013563">
    <property type="entry name" value="Oligopep_ABC_C"/>
</dbReference>
<dbReference type="InterPro" id="IPR027417">
    <property type="entry name" value="P-loop_NTPase"/>
</dbReference>
<dbReference type="NCBIfam" id="TIGR01727">
    <property type="entry name" value="oligo_HPY"/>
    <property type="match status" value="1"/>
</dbReference>
<dbReference type="PANTHER" id="PTHR43297:SF2">
    <property type="entry name" value="DIPEPTIDE TRANSPORT ATP-BINDING PROTEIN DPPD"/>
    <property type="match status" value="1"/>
</dbReference>
<dbReference type="PANTHER" id="PTHR43297">
    <property type="entry name" value="OLIGOPEPTIDE TRANSPORT ATP-BINDING PROTEIN APPD"/>
    <property type="match status" value="1"/>
</dbReference>
<dbReference type="Pfam" id="PF00005">
    <property type="entry name" value="ABC_tran"/>
    <property type="match status" value="1"/>
</dbReference>
<dbReference type="Pfam" id="PF08352">
    <property type="entry name" value="oligo_HPY"/>
    <property type="match status" value="1"/>
</dbReference>
<dbReference type="SMART" id="SM00382">
    <property type="entry name" value="AAA"/>
    <property type="match status" value="1"/>
</dbReference>
<dbReference type="SUPFAM" id="SSF52540">
    <property type="entry name" value="P-loop containing nucleoside triphosphate hydrolases"/>
    <property type="match status" value="1"/>
</dbReference>
<dbReference type="PROSITE" id="PS00211">
    <property type="entry name" value="ABC_TRANSPORTER_1"/>
    <property type="match status" value="1"/>
</dbReference>
<dbReference type="PROSITE" id="PS50893">
    <property type="entry name" value="ABC_TRANSPORTER_2"/>
    <property type="match status" value="1"/>
</dbReference>
<protein>
    <recommendedName>
        <fullName>Dipeptide transport ATP-binding protein DppD</fullName>
        <ecNumber evidence="1">7.4.2.9</ecNumber>
    </recommendedName>
</protein>
<keyword id="KW-0067">ATP-binding</keyword>
<keyword id="KW-1003">Cell membrane</keyword>
<keyword id="KW-0472">Membrane</keyword>
<keyword id="KW-0547">Nucleotide-binding</keyword>
<keyword id="KW-0571">Peptide transport</keyword>
<keyword id="KW-0653">Protein transport</keyword>
<keyword id="KW-1185">Reference proteome</keyword>
<keyword id="KW-0749">Sporulation</keyword>
<keyword id="KW-1278">Translocase</keyword>
<keyword id="KW-0813">Transport</keyword>
<comment type="function">
    <text evidence="3 4">Probably part of the ABC transporter DppBCDE involved in dipeptide transport (Probable). Responsible for energy coupling to the transport system (Probable).</text>
</comment>
<comment type="catalytic activity">
    <reaction evidence="1">
        <text>a dipeptide(out) + ATP + H2O = a dipeptide(in) + ADP + phosphate + H(+)</text>
        <dbReference type="Rhea" id="RHEA:23120"/>
        <dbReference type="ChEBI" id="CHEBI:15377"/>
        <dbReference type="ChEBI" id="CHEBI:15378"/>
        <dbReference type="ChEBI" id="CHEBI:30616"/>
        <dbReference type="ChEBI" id="CHEBI:43474"/>
        <dbReference type="ChEBI" id="CHEBI:90799"/>
        <dbReference type="ChEBI" id="CHEBI:456216"/>
        <dbReference type="EC" id="7.4.2.9"/>
    </reaction>
</comment>
<comment type="subcellular location">
    <subcellularLocation>
        <location evidence="3">Cell membrane</location>
        <topology evidence="3">Peripheral membrane protein</topology>
    </subcellularLocation>
</comment>
<comment type="similarity">
    <text evidence="3">Belongs to the ABC transporter superfamily.</text>
</comment>
<feature type="chain" id="PRO_0000092312" description="Dipeptide transport ATP-binding protein DppD">
    <location>
        <begin position="1"/>
        <end position="335"/>
    </location>
</feature>
<feature type="domain" description="ABC transporter" evidence="2">
    <location>
        <begin position="7"/>
        <end position="256"/>
    </location>
</feature>
<feature type="binding site" evidence="2">
    <location>
        <begin position="41"/>
        <end position="48"/>
    </location>
    <ligand>
        <name>ATP</name>
        <dbReference type="ChEBI" id="CHEBI:30616"/>
    </ligand>
</feature>
<gene>
    <name type="primary">dppD</name>
    <name type="synonym">dciAD</name>
    <name type="ordered locus">BSU12950</name>
</gene>
<evidence type="ECO:0000250" key="1">
    <source>
        <dbReference type="UniProtKB" id="A2RI77"/>
    </source>
</evidence>
<evidence type="ECO:0000255" key="2">
    <source>
        <dbReference type="PROSITE-ProRule" id="PRU00434"/>
    </source>
</evidence>
<evidence type="ECO:0000305" key="3"/>
<evidence type="ECO:0000305" key="4">
    <source>
    </source>
</evidence>
<proteinExistence type="inferred from homology"/>
<reference key="1">
    <citation type="journal article" date="1991" name="Mol. Microbiol.">
        <title>A Bacillus subtilis dipeptide transport system expressed early during sporulation.</title>
        <authorList>
            <person name="Mathiopoulos C."/>
            <person name="Mueller J.P."/>
            <person name="Slack F.J."/>
            <person name="Murphy C.G."/>
            <person name="Patankar S."/>
            <person name="Bukusoglu G."/>
            <person name="Sonenshein A.L."/>
        </authorList>
    </citation>
    <scope>NUCLEOTIDE SEQUENCE [GENOMIC DNA]</scope>
    <scope>FUNCTION</scope>
    <source>
        <strain>168</strain>
    </source>
</reference>
<reference key="2">
    <citation type="submission" date="1997-11" db="EMBL/GenBank/DDBJ databases">
        <title>Sequence of the Bacillus subtilis genome between xlyA and ykoR.</title>
        <authorList>
            <person name="Devine K.M."/>
        </authorList>
    </citation>
    <scope>NUCLEOTIDE SEQUENCE [GENOMIC DNA]</scope>
    <source>
        <strain>168</strain>
    </source>
</reference>
<reference key="3">
    <citation type="journal article" date="1997" name="Nature">
        <title>The complete genome sequence of the Gram-positive bacterium Bacillus subtilis.</title>
        <authorList>
            <person name="Kunst F."/>
            <person name="Ogasawara N."/>
            <person name="Moszer I."/>
            <person name="Albertini A.M."/>
            <person name="Alloni G."/>
            <person name="Azevedo V."/>
            <person name="Bertero M.G."/>
            <person name="Bessieres P."/>
            <person name="Bolotin A."/>
            <person name="Borchert S."/>
            <person name="Borriss R."/>
            <person name="Boursier L."/>
            <person name="Brans A."/>
            <person name="Braun M."/>
            <person name="Brignell S.C."/>
            <person name="Bron S."/>
            <person name="Brouillet S."/>
            <person name="Bruschi C.V."/>
            <person name="Caldwell B."/>
            <person name="Capuano V."/>
            <person name="Carter N.M."/>
            <person name="Choi S.-K."/>
            <person name="Codani J.-J."/>
            <person name="Connerton I.F."/>
            <person name="Cummings N.J."/>
            <person name="Daniel R.A."/>
            <person name="Denizot F."/>
            <person name="Devine K.M."/>
            <person name="Duesterhoeft A."/>
            <person name="Ehrlich S.D."/>
            <person name="Emmerson P.T."/>
            <person name="Entian K.-D."/>
            <person name="Errington J."/>
            <person name="Fabret C."/>
            <person name="Ferrari E."/>
            <person name="Foulger D."/>
            <person name="Fritz C."/>
            <person name="Fujita M."/>
            <person name="Fujita Y."/>
            <person name="Fuma S."/>
            <person name="Galizzi A."/>
            <person name="Galleron N."/>
            <person name="Ghim S.-Y."/>
            <person name="Glaser P."/>
            <person name="Goffeau A."/>
            <person name="Golightly E.J."/>
            <person name="Grandi G."/>
            <person name="Guiseppi G."/>
            <person name="Guy B.J."/>
            <person name="Haga K."/>
            <person name="Haiech J."/>
            <person name="Harwood C.R."/>
            <person name="Henaut A."/>
            <person name="Hilbert H."/>
            <person name="Holsappel S."/>
            <person name="Hosono S."/>
            <person name="Hullo M.-F."/>
            <person name="Itaya M."/>
            <person name="Jones L.-M."/>
            <person name="Joris B."/>
            <person name="Karamata D."/>
            <person name="Kasahara Y."/>
            <person name="Klaerr-Blanchard M."/>
            <person name="Klein C."/>
            <person name="Kobayashi Y."/>
            <person name="Koetter P."/>
            <person name="Koningstein G."/>
            <person name="Krogh S."/>
            <person name="Kumano M."/>
            <person name="Kurita K."/>
            <person name="Lapidus A."/>
            <person name="Lardinois S."/>
            <person name="Lauber J."/>
            <person name="Lazarevic V."/>
            <person name="Lee S.-M."/>
            <person name="Levine A."/>
            <person name="Liu H."/>
            <person name="Masuda S."/>
            <person name="Mauel C."/>
            <person name="Medigue C."/>
            <person name="Medina N."/>
            <person name="Mellado R.P."/>
            <person name="Mizuno M."/>
            <person name="Moestl D."/>
            <person name="Nakai S."/>
            <person name="Noback M."/>
            <person name="Noone D."/>
            <person name="O'Reilly M."/>
            <person name="Ogawa K."/>
            <person name="Ogiwara A."/>
            <person name="Oudega B."/>
            <person name="Park S.-H."/>
            <person name="Parro V."/>
            <person name="Pohl T.M."/>
            <person name="Portetelle D."/>
            <person name="Porwollik S."/>
            <person name="Prescott A.M."/>
            <person name="Presecan E."/>
            <person name="Pujic P."/>
            <person name="Purnelle B."/>
            <person name="Rapoport G."/>
            <person name="Rey M."/>
            <person name="Reynolds S."/>
            <person name="Rieger M."/>
            <person name="Rivolta C."/>
            <person name="Rocha E."/>
            <person name="Roche B."/>
            <person name="Rose M."/>
            <person name="Sadaie Y."/>
            <person name="Sato T."/>
            <person name="Scanlan E."/>
            <person name="Schleich S."/>
            <person name="Schroeter R."/>
            <person name="Scoffone F."/>
            <person name="Sekiguchi J."/>
            <person name="Sekowska A."/>
            <person name="Seror S.J."/>
            <person name="Serror P."/>
            <person name="Shin B.-S."/>
            <person name="Soldo B."/>
            <person name="Sorokin A."/>
            <person name="Tacconi E."/>
            <person name="Takagi T."/>
            <person name="Takahashi H."/>
            <person name="Takemaru K."/>
            <person name="Takeuchi M."/>
            <person name="Tamakoshi A."/>
            <person name="Tanaka T."/>
            <person name="Terpstra P."/>
            <person name="Tognoni A."/>
            <person name="Tosato V."/>
            <person name="Uchiyama S."/>
            <person name="Vandenbol M."/>
            <person name="Vannier F."/>
            <person name="Vassarotti A."/>
            <person name="Viari A."/>
            <person name="Wambutt R."/>
            <person name="Wedler E."/>
            <person name="Wedler H."/>
            <person name="Weitzenegger T."/>
            <person name="Winters P."/>
            <person name="Wipat A."/>
            <person name="Yamamoto H."/>
            <person name="Yamane K."/>
            <person name="Yasumoto K."/>
            <person name="Yata K."/>
            <person name="Yoshida K."/>
            <person name="Yoshikawa H.-F."/>
            <person name="Zumstein E."/>
            <person name="Yoshikawa H."/>
            <person name="Danchin A."/>
        </authorList>
    </citation>
    <scope>NUCLEOTIDE SEQUENCE [LARGE SCALE GENOMIC DNA]</scope>
    <source>
        <strain>168</strain>
    </source>
</reference>
<name>DPPD_BACSU</name>
<sequence>MEKVLSVQNLHVSFTTYGGTVQAVRGVSFDLYKGETFAIVGESGCGKSVTSQSIMGLLPPYSAKVTDGRILFKNKDLCRLSDKEMRGIRGADISMIFQDPMTALNPTLTVGDQLGEALLRHKKMSKKAARKEVLSMLSLVGIPDPGERLKQYPHQFSGGMRQRIVIAMALICEPDILIADEPTTALDVTIQAQILELFKEIQRKTDVSVILITHDLGVVAQVADRVAVMYAGKMAEIGTRKDIFYQPQHPYTKGLLGSVPRLDLNGAELTPIDGTPPDLFSPPPGCPFAARCPNRMVVCDRVYPGQTIRSDSHTVNCWLQDQRAEHAVLSGDAKD</sequence>